<keyword id="KW-0249">Electron transport</keyword>
<keyword id="KW-0472">Membrane</keyword>
<keyword id="KW-0496">Mitochondrion</keyword>
<keyword id="KW-0999">Mitochondrion inner membrane</keyword>
<keyword id="KW-0520">NAD</keyword>
<keyword id="KW-0679">Respiratory chain</keyword>
<keyword id="KW-1278">Translocase</keyword>
<keyword id="KW-0812">Transmembrane</keyword>
<keyword id="KW-1133">Transmembrane helix</keyword>
<keyword id="KW-0813">Transport</keyword>
<keyword id="KW-0830">Ubiquinone</keyword>
<comment type="function">
    <text evidence="1">Core subunit of the mitochondrial membrane respiratory chain NADH dehydrogenase (Complex I) that is believed to belong to the minimal assembly required for catalysis. Complex I functions in the transfer of electrons from NADH to the respiratory chain. The immediate electron acceptor for the enzyme is believed to be ubiquinone (By similarity).</text>
</comment>
<comment type="catalytic activity">
    <reaction>
        <text>a ubiquinone + NADH + 5 H(+)(in) = a ubiquinol + NAD(+) + 4 H(+)(out)</text>
        <dbReference type="Rhea" id="RHEA:29091"/>
        <dbReference type="Rhea" id="RHEA-COMP:9565"/>
        <dbReference type="Rhea" id="RHEA-COMP:9566"/>
        <dbReference type="ChEBI" id="CHEBI:15378"/>
        <dbReference type="ChEBI" id="CHEBI:16389"/>
        <dbReference type="ChEBI" id="CHEBI:17976"/>
        <dbReference type="ChEBI" id="CHEBI:57540"/>
        <dbReference type="ChEBI" id="CHEBI:57945"/>
        <dbReference type="EC" id="7.1.1.2"/>
    </reaction>
</comment>
<comment type="subcellular location">
    <subcellularLocation>
        <location evidence="1">Mitochondrion inner membrane</location>
        <topology evidence="1">Multi-pass membrane protein</topology>
    </subcellularLocation>
</comment>
<comment type="similarity">
    <text evidence="3">Belongs to the complex I subunit 1 family.</text>
</comment>
<accession>Q94VK0</accession>
<organism>
    <name type="scientific">Varanus baritji</name>
    <name type="common">Black-spotted ridge-tailed monitor</name>
    <name type="synonym">Varanus insulanicus baritji</name>
    <dbReference type="NCBI Taxonomy" id="169834"/>
    <lineage>
        <taxon>Eukaryota</taxon>
        <taxon>Metazoa</taxon>
        <taxon>Chordata</taxon>
        <taxon>Craniata</taxon>
        <taxon>Vertebrata</taxon>
        <taxon>Euteleostomi</taxon>
        <taxon>Lepidosauria</taxon>
        <taxon>Squamata</taxon>
        <taxon>Bifurcata</taxon>
        <taxon>Unidentata</taxon>
        <taxon>Episquamata</taxon>
        <taxon>Toxicofera</taxon>
        <taxon>Anguimorpha</taxon>
        <taxon>Paleoanguimorpha</taxon>
        <taxon>Varanoidea</taxon>
        <taxon>Varanidae</taxon>
        <taxon>Varanus</taxon>
    </lineage>
</organism>
<name>NU1M_VARBA</name>
<feature type="chain" id="PRO_0000117493" description="NADH-ubiquinone oxidoreductase chain 1">
    <location>
        <begin position="1"/>
        <end position="321"/>
    </location>
</feature>
<feature type="transmembrane region" description="Helical" evidence="2">
    <location>
        <begin position="5"/>
        <end position="25"/>
    </location>
</feature>
<feature type="transmembrane region" description="Helical" evidence="2">
    <location>
        <begin position="74"/>
        <end position="94"/>
    </location>
</feature>
<feature type="transmembrane region" description="Helical" evidence="2">
    <location>
        <begin position="104"/>
        <end position="124"/>
    </location>
</feature>
<feature type="transmembrane region" description="Helical" evidence="2">
    <location>
        <begin position="151"/>
        <end position="171"/>
    </location>
</feature>
<feature type="transmembrane region" description="Helical" evidence="2">
    <location>
        <begin position="175"/>
        <end position="195"/>
    </location>
</feature>
<feature type="transmembrane region" description="Helical" evidence="2">
    <location>
        <begin position="227"/>
        <end position="247"/>
    </location>
</feature>
<feature type="transmembrane region" description="Helical" evidence="2">
    <location>
        <begin position="256"/>
        <end position="276"/>
    </location>
</feature>
<feature type="transmembrane region" description="Helical" evidence="2">
    <location>
        <begin position="296"/>
        <end position="316"/>
    </location>
</feature>
<protein>
    <recommendedName>
        <fullName>NADH-ubiquinone oxidoreductase chain 1</fullName>
        <ecNumber>7.1.1.2</ecNumber>
    </recommendedName>
    <alternativeName>
        <fullName>NADH dehydrogenase subunit 1</fullName>
    </alternativeName>
</protein>
<geneLocation type="mitochondrion"/>
<gene>
    <name type="primary">MT-ND1</name>
    <name type="synonym">MTND1</name>
    <name type="synonym">NADH1</name>
    <name type="synonym">ND1</name>
</gene>
<evidence type="ECO:0000250" key="1"/>
<evidence type="ECO:0000255" key="2"/>
<evidence type="ECO:0000305" key="3"/>
<dbReference type="EC" id="7.1.1.2"/>
<dbReference type="EMBL" id="AF407489">
    <property type="protein sequence ID" value="AAL10022.1"/>
    <property type="molecule type" value="Genomic_DNA"/>
</dbReference>
<dbReference type="SMR" id="Q94VK0"/>
<dbReference type="GO" id="GO:0005743">
    <property type="term" value="C:mitochondrial inner membrane"/>
    <property type="evidence" value="ECO:0007669"/>
    <property type="project" value="UniProtKB-SubCell"/>
</dbReference>
<dbReference type="GO" id="GO:0008137">
    <property type="term" value="F:NADH dehydrogenase (ubiquinone) activity"/>
    <property type="evidence" value="ECO:0007669"/>
    <property type="project" value="UniProtKB-EC"/>
</dbReference>
<dbReference type="GO" id="GO:0009060">
    <property type="term" value="P:aerobic respiration"/>
    <property type="evidence" value="ECO:0007669"/>
    <property type="project" value="TreeGrafter"/>
</dbReference>
<dbReference type="HAMAP" id="MF_01350">
    <property type="entry name" value="NDH1_NuoH"/>
    <property type="match status" value="1"/>
</dbReference>
<dbReference type="InterPro" id="IPR001694">
    <property type="entry name" value="NADH_UbQ_OxRdtase_su1/FPO"/>
</dbReference>
<dbReference type="InterPro" id="IPR018086">
    <property type="entry name" value="NADH_UbQ_OxRdtase_su1_CS"/>
</dbReference>
<dbReference type="PANTHER" id="PTHR11432">
    <property type="entry name" value="NADH DEHYDROGENASE SUBUNIT 1"/>
    <property type="match status" value="1"/>
</dbReference>
<dbReference type="PANTHER" id="PTHR11432:SF3">
    <property type="entry name" value="NADH-UBIQUINONE OXIDOREDUCTASE CHAIN 1"/>
    <property type="match status" value="1"/>
</dbReference>
<dbReference type="Pfam" id="PF00146">
    <property type="entry name" value="NADHdh"/>
    <property type="match status" value="1"/>
</dbReference>
<dbReference type="PROSITE" id="PS00667">
    <property type="entry name" value="COMPLEX1_ND1_1"/>
    <property type="match status" value="1"/>
</dbReference>
<dbReference type="PROSITE" id="PS00668">
    <property type="entry name" value="COMPLEX1_ND1_2"/>
    <property type="match status" value="1"/>
</dbReference>
<proteinExistence type="inferred from homology"/>
<reference key="1">
    <citation type="journal article" date="2001" name="Cladistics">
        <title>Mitochondrial DNA evidence and evolution in Varanoidea (Squamata).</title>
        <authorList>
            <person name="Ast J.C."/>
        </authorList>
    </citation>
    <scope>NUCLEOTIDE SEQUENCE [GENOMIC DNA]</scope>
    <source>
        <strain>Isolate UMMZ 222676</strain>
    </source>
</reference>
<sequence length="321" mass="35426">MSPSLVTLNSLMYIIPILIAVAFLTLTERKILGYMQHRKGPNITGPHGLLQPIADGLKLFIKEPVRPLNASPTLLILSPLLAITAAMLIWAPIPMPYSLANLNLGLLSILAISGMAVNSILWAGWASNSKYALIGSLRAVAQTISYEVTLGIILLSTLVLTGGFTIQLLTITQKYTWLLTTSWPLTMMWFISTLAETNRAPFDLTEGESELVSGFNVEYAGGPFALFFLAEYANIITMNLLTCILFINPGPSQYPELFLANLIAKTTILCLSFLWIRASYPRFRYDQLMHLLWKQFLPMTMALCLLHASLSISISGLPPHP</sequence>